<dbReference type="EMBL" id="L36529">
    <property type="protein sequence ID" value="AAA53571.1"/>
    <property type="molecule type" value="mRNA"/>
</dbReference>
<dbReference type="EMBL" id="AY573302">
    <property type="protein sequence ID" value="AAT81408.1"/>
    <property type="molecule type" value="mRNA"/>
</dbReference>
<dbReference type="EMBL" id="AY573303">
    <property type="protein sequence ID" value="AAT81409.1"/>
    <property type="molecule type" value="mRNA"/>
</dbReference>
<dbReference type="EMBL" id="AK314755">
    <property type="protein sequence ID" value="BAG37293.1"/>
    <property type="molecule type" value="mRNA"/>
</dbReference>
<dbReference type="EMBL" id="AP000845">
    <property type="status" value="NOT_ANNOTATED_CDS"/>
    <property type="molecule type" value="Genomic_DNA"/>
</dbReference>
<dbReference type="EMBL" id="CH471113">
    <property type="protein sequence ID" value="EAX01732.1"/>
    <property type="molecule type" value="Genomic_DNA"/>
</dbReference>
<dbReference type="EMBL" id="BC010381">
    <property type="protein sequence ID" value="AAH10381.1"/>
    <property type="molecule type" value="mRNA"/>
</dbReference>
<dbReference type="CCDS" id="CCDS45820.1">
    <molecule id="Q96FV9-1"/>
</dbReference>
<dbReference type="PIR" id="A53545">
    <property type="entry name" value="A53545"/>
</dbReference>
<dbReference type="RefSeq" id="NP_005122.2">
    <molecule id="Q96FV9-1"/>
    <property type="nucleotide sequence ID" value="NM_005131.3"/>
</dbReference>
<dbReference type="PDB" id="1WXP">
    <property type="method" value="NMR"/>
    <property type="chains" value="A=561-657"/>
</dbReference>
<dbReference type="PDB" id="7APK">
    <property type="method" value="EM"/>
    <property type="resolution" value="3.30 A"/>
    <property type="chains" value="A/I/a/i=2-657"/>
</dbReference>
<dbReference type="PDB" id="7ZNK">
    <property type="method" value="EM"/>
    <property type="resolution" value="3.90 A"/>
    <property type="chains" value="A/I/a/i=1-657"/>
</dbReference>
<dbReference type="PDB" id="7ZNL">
    <property type="method" value="EM"/>
    <property type="resolution" value="3.45 A"/>
    <property type="chains" value="A/I/a/i=1-657"/>
</dbReference>
<dbReference type="PDBsum" id="1WXP"/>
<dbReference type="PDBsum" id="7APK"/>
<dbReference type="PDBsum" id="7ZNK"/>
<dbReference type="PDBsum" id="7ZNL"/>
<dbReference type="EMDB" id="EMD-11857"/>
<dbReference type="EMDB" id="EMD-14804"/>
<dbReference type="EMDB" id="EMD-14808"/>
<dbReference type="SMR" id="Q96FV9"/>
<dbReference type="BioGRID" id="115305">
    <property type="interactions" value="208"/>
</dbReference>
<dbReference type="ComplexPortal" id="CPX-2488">
    <property type="entry name" value="TREX transcription-export complex, DX39B variant"/>
</dbReference>
<dbReference type="ComplexPortal" id="CPX-7261">
    <property type="entry name" value="TREX transcription-export complex, DX39A variant"/>
</dbReference>
<dbReference type="CORUM" id="Q96FV9"/>
<dbReference type="FunCoup" id="Q96FV9">
    <property type="interactions" value="3966"/>
</dbReference>
<dbReference type="IntAct" id="Q96FV9">
    <property type="interactions" value="122"/>
</dbReference>
<dbReference type="MINT" id="Q96FV9"/>
<dbReference type="STRING" id="9606.ENSP00000261600"/>
<dbReference type="TCDB" id="3.A.22.1.2">
    <property type="family name" value="the transcription-coupled trex/tap nuclear mrna export complex (trex) family"/>
</dbReference>
<dbReference type="GlyGen" id="Q96FV9">
    <property type="glycosylation" value="3 sites, 1 N-linked glycan (1 site), 1 O-linked glycan (1 site)"/>
</dbReference>
<dbReference type="iPTMnet" id="Q96FV9"/>
<dbReference type="MetOSite" id="Q96FV9"/>
<dbReference type="PhosphoSitePlus" id="Q96FV9"/>
<dbReference type="SwissPalm" id="Q96FV9"/>
<dbReference type="BioMuta" id="THOC1"/>
<dbReference type="DMDM" id="37999906"/>
<dbReference type="jPOST" id="Q96FV9"/>
<dbReference type="MassIVE" id="Q96FV9"/>
<dbReference type="PaxDb" id="9606-ENSP00000261600"/>
<dbReference type="PeptideAtlas" id="Q96FV9"/>
<dbReference type="ProteomicsDB" id="76564">
    <molecule id="Q96FV9-1"/>
</dbReference>
<dbReference type="ProteomicsDB" id="76565">
    <molecule id="Q96FV9-2"/>
</dbReference>
<dbReference type="Pumba" id="Q96FV9"/>
<dbReference type="Antibodypedia" id="4748">
    <property type="antibodies" value="351 antibodies from 32 providers"/>
</dbReference>
<dbReference type="DNASU" id="9984"/>
<dbReference type="Ensembl" id="ENST00000261600.11">
    <molecule id="Q96FV9-1"/>
    <property type="protein sequence ID" value="ENSP00000261600.6"/>
    <property type="gene ID" value="ENSG00000079134.13"/>
</dbReference>
<dbReference type="GeneID" id="9984"/>
<dbReference type="KEGG" id="hsa:9984"/>
<dbReference type="MANE-Select" id="ENST00000261600.11">
    <property type="protein sequence ID" value="ENSP00000261600.6"/>
    <property type="RefSeq nucleotide sequence ID" value="NM_005131.3"/>
    <property type="RefSeq protein sequence ID" value="NP_005122.2"/>
</dbReference>
<dbReference type="UCSC" id="uc002kkj.5">
    <molecule id="Q96FV9-1"/>
    <property type="organism name" value="human"/>
</dbReference>
<dbReference type="AGR" id="HGNC:19070"/>
<dbReference type="CTD" id="9984"/>
<dbReference type="DisGeNET" id="9984"/>
<dbReference type="GeneCards" id="THOC1"/>
<dbReference type="HGNC" id="HGNC:19070">
    <property type="gene designation" value="THOC1"/>
</dbReference>
<dbReference type="HPA" id="ENSG00000079134">
    <property type="expression patterns" value="Low tissue specificity"/>
</dbReference>
<dbReference type="MalaCards" id="THOC1"/>
<dbReference type="MIM" id="606930">
    <property type="type" value="gene"/>
</dbReference>
<dbReference type="MIM" id="620280">
    <property type="type" value="phenotype"/>
</dbReference>
<dbReference type="neXtProt" id="NX_Q96FV9"/>
<dbReference type="OpenTargets" id="ENSG00000079134"/>
<dbReference type="PharmGKB" id="PA134887435"/>
<dbReference type="VEuPathDB" id="HostDB:ENSG00000079134"/>
<dbReference type="eggNOG" id="KOG2491">
    <property type="taxonomic scope" value="Eukaryota"/>
</dbReference>
<dbReference type="GeneTree" id="ENSGT00390000016232"/>
<dbReference type="HOGENOM" id="CLU_027906_0_0_1"/>
<dbReference type="InParanoid" id="Q96FV9"/>
<dbReference type="OrthoDB" id="10257415at2759"/>
<dbReference type="PAN-GO" id="Q96FV9">
    <property type="GO annotations" value="3 GO annotations based on evolutionary models"/>
</dbReference>
<dbReference type="PhylomeDB" id="Q96FV9"/>
<dbReference type="TreeFam" id="TF314796"/>
<dbReference type="PathwayCommons" id="Q96FV9"/>
<dbReference type="Reactome" id="R-HSA-159236">
    <property type="pathway name" value="Transport of Mature mRNA derived from an Intron-Containing Transcript"/>
</dbReference>
<dbReference type="Reactome" id="R-HSA-72187">
    <property type="pathway name" value="mRNA 3'-end processing"/>
</dbReference>
<dbReference type="Reactome" id="R-HSA-73856">
    <property type="pathway name" value="RNA Polymerase II Transcription Termination"/>
</dbReference>
<dbReference type="SignaLink" id="Q96FV9"/>
<dbReference type="SIGNOR" id="Q96FV9"/>
<dbReference type="BioGRID-ORCS" id="9984">
    <property type="hits" value="703 hits in 1171 CRISPR screens"/>
</dbReference>
<dbReference type="ChiTaRS" id="THOC1">
    <property type="organism name" value="human"/>
</dbReference>
<dbReference type="EvolutionaryTrace" id="Q96FV9"/>
<dbReference type="GeneWiki" id="THOC1"/>
<dbReference type="GenomeRNAi" id="9984"/>
<dbReference type="Pharos" id="Q96FV9">
    <property type="development level" value="Tbio"/>
</dbReference>
<dbReference type="PRO" id="PR:Q96FV9"/>
<dbReference type="Proteomes" id="UP000005640">
    <property type="component" value="Chromosome 18"/>
</dbReference>
<dbReference type="RNAct" id="Q96FV9">
    <property type="molecule type" value="protein"/>
</dbReference>
<dbReference type="Bgee" id="ENSG00000079134">
    <property type="expression patterns" value="Expressed in calcaneal tendon and 205 other cell types or tissues"/>
</dbReference>
<dbReference type="ExpressionAtlas" id="Q96FV9">
    <property type="expression patterns" value="baseline and differential"/>
</dbReference>
<dbReference type="GO" id="GO:0005737">
    <property type="term" value="C:cytoplasm"/>
    <property type="evidence" value="ECO:0000314"/>
    <property type="project" value="UniProtKB"/>
</dbReference>
<dbReference type="GO" id="GO:0016363">
    <property type="term" value="C:nuclear matrix"/>
    <property type="evidence" value="ECO:0007669"/>
    <property type="project" value="UniProtKB-SubCell"/>
</dbReference>
<dbReference type="GO" id="GO:0016607">
    <property type="term" value="C:nuclear speck"/>
    <property type="evidence" value="ECO:0000314"/>
    <property type="project" value="HPA"/>
</dbReference>
<dbReference type="GO" id="GO:0005654">
    <property type="term" value="C:nucleoplasm"/>
    <property type="evidence" value="ECO:0000304"/>
    <property type="project" value="Reactome"/>
</dbReference>
<dbReference type="GO" id="GO:0005634">
    <property type="term" value="C:nucleus"/>
    <property type="evidence" value="ECO:0000314"/>
    <property type="project" value="UniProtKB"/>
</dbReference>
<dbReference type="GO" id="GO:0000347">
    <property type="term" value="C:THO complex"/>
    <property type="evidence" value="ECO:0000314"/>
    <property type="project" value="UniProtKB"/>
</dbReference>
<dbReference type="GO" id="GO:0000445">
    <property type="term" value="C:THO complex part of transcription export complex"/>
    <property type="evidence" value="ECO:0000314"/>
    <property type="project" value="UniProtKB"/>
</dbReference>
<dbReference type="GO" id="GO:0000346">
    <property type="term" value="C:transcription export complex"/>
    <property type="evidence" value="ECO:0000314"/>
    <property type="project" value="UniProtKB"/>
</dbReference>
<dbReference type="GO" id="GO:0003677">
    <property type="term" value="F:DNA binding"/>
    <property type="evidence" value="ECO:0007669"/>
    <property type="project" value="UniProtKB-KW"/>
</dbReference>
<dbReference type="GO" id="GO:0003723">
    <property type="term" value="F:RNA binding"/>
    <property type="evidence" value="ECO:0007669"/>
    <property type="project" value="UniProtKB-KW"/>
</dbReference>
<dbReference type="GO" id="GO:0006915">
    <property type="term" value="P:apoptotic process"/>
    <property type="evidence" value="ECO:0007669"/>
    <property type="project" value="UniProtKB-KW"/>
</dbReference>
<dbReference type="GO" id="GO:0006406">
    <property type="term" value="P:mRNA export from nucleus"/>
    <property type="evidence" value="ECO:0000315"/>
    <property type="project" value="UniProtKB"/>
</dbReference>
<dbReference type="GO" id="GO:0006397">
    <property type="term" value="P:mRNA processing"/>
    <property type="evidence" value="ECO:0007669"/>
    <property type="project" value="UniProtKB-KW"/>
</dbReference>
<dbReference type="GO" id="GO:0008380">
    <property type="term" value="P:RNA splicing"/>
    <property type="evidence" value="ECO:0007669"/>
    <property type="project" value="UniProtKB-KW"/>
</dbReference>
<dbReference type="GO" id="GO:0007165">
    <property type="term" value="P:signal transduction"/>
    <property type="evidence" value="ECO:0007669"/>
    <property type="project" value="InterPro"/>
</dbReference>
<dbReference type="CDD" id="cd08318">
    <property type="entry name" value="Death_NMPP84"/>
    <property type="match status" value="1"/>
</dbReference>
<dbReference type="FunFam" id="1.10.533.10:FF:000025">
    <property type="entry name" value="THO complex subunit 1"/>
    <property type="match status" value="1"/>
</dbReference>
<dbReference type="Gene3D" id="1.10.533.10">
    <property type="entry name" value="Death Domain, Fas"/>
    <property type="match status" value="1"/>
</dbReference>
<dbReference type="InterPro" id="IPR011029">
    <property type="entry name" value="DEATH-like_dom_sf"/>
</dbReference>
<dbReference type="InterPro" id="IPR000488">
    <property type="entry name" value="Death_dom"/>
</dbReference>
<dbReference type="InterPro" id="IPR021861">
    <property type="entry name" value="THO_THOC1"/>
</dbReference>
<dbReference type="PANTHER" id="PTHR13265">
    <property type="entry name" value="THO COMPLEX SUBUNIT 1"/>
    <property type="match status" value="1"/>
</dbReference>
<dbReference type="PANTHER" id="PTHR13265:SF2">
    <property type="entry name" value="THO COMPLEX SUBUNIT 1"/>
    <property type="match status" value="1"/>
</dbReference>
<dbReference type="Pfam" id="PF00531">
    <property type="entry name" value="Death"/>
    <property type="match status" value="1"/>
</dbReference>
<dbReference type="Pfam" id="PF11957">
    <property type="entry name" value="efThoc1"/>
    <property type="match status" value="1"/>
</dbReference>
<dbReference type="SMART" id="SM00005">
    <property type="entry name" value="DEATH"/>
    <property type="match status" value="1"/>
</dbReference>
<dbReference type="SUPFAM" id="SSF47986">
    <property type="entry name" value="DEATH domain"/>
    <property type="match status" value="1"/>
</dbReference>
<dbReference type="PROSITE" id="PS50017">
    <property type="entry name" value="DEATH_DOMAIN"/>
    <property type="match status" value="1"/>
</dbReference>
<evidence type="ECO:0000250" key="1">
    <source>
        <dbReference type="UniProtKB" id="Q7SYB2"/>
    </source>
</evidence>
<evidence type="ECO:0000255" key="2">
    <source>
        <dbReference type="PROSITE-ProRule" id="PRU00064"/>
    </source>
</evidence>
<evidence type="ECO:0000256" key="3">
    <source>
        <dbReference type="SAM" id="MobiDB-lite"/>
    </source>
</evidence>
<evidence type="ECO:0000269" key="4">
    <source>
    </source>
</evidence>
<evidence type="ECO:0000269" key="5">
    <source>
    </source>
</evidence>
<evidence type="ECO:0000269" key="6">
    <source>
    </source>
</evidence>
<evidence type="ECO:0000269" key="7">
    <source>
    </source>
</evidence>
<evidence type="ECO:0000269" key="8">
    <source>
    </source>
</evidence>
<evidence type="ECO:0000269" key="9">
    <source>
    </source>
</evidence>
<evidence type="ECO:0000269" key="10">
    <source>
    </source>
</evidence>
<evidence type="ECO:0000269" key="11">
    <source>
    </source>
</evidence>
<evidence type="ECO:0000269" key="12">
    <source>
    </source>
</evidence>
<evidence type="ECO:0000269" key="13">
    <source>
    </source>
</evidence>
<evidence type="ECO:0000269" key="14">
    <source>
    </source>
</evidence>
<evidence type="ECO:0000269" key="15">
    <source>
    </source>
</evidence>
<evidence type="ECO:0000269" key="16">
    <source>
    </source>
</evidence>
<evidence type="ECO:0000269" key="17">
    <source>
    </source>
</evidence>
<evidence type="ECO:0000269" key="18">
    <source>
    </source>
</evidence>
<evidence type="ECO:0000269" key="19">
    <source>
    </source>
</evidence>
<evidence type="ECO:0000269" key="20">
    <source>
    </source>
</evidence>
<evidence type="ECO:0000303" key="21">
    <source>
    </source>
</evidence>
<evidence type="ECO:0000303" key="22">
    <source>
    </source>
</evidence>
<evidence type="ECO:0000305" key="23"/>
<evidence type="ECO:0007744" key="24">
    <source>
        <dbReference type="PDB" id="1WXP"/>
    </source>
</evidence>
<evidence type="ECO:0007744" key="25">
    <source>
        <dbReference type="PDB" id="7APK"/>
    </source>
</evidence>
<evidence type="ECO:0007744" key="26">
    <source>
        <dbReference type="PDB" id="7ZNK"/>
    </source>
</evidence>
<evidence type="ECO:0007744" key="27">
    <source>
        <dbReference type="PDB" id="7ZNL"/>
    </source>
</evidence>
<evidence type="ECO:0007744" key="28">
    <source>
    </source>
</evidence>
<evidence type="ECO:0007744" key="29">
    <source>
    </source>
</evidence>
<evidence type="ECO:0007744" key="30">
    <source>
    </source>
</evidence>
<evidence type="ECO:0007744" key="31">
    <source>
    </source>
</evidence>
<evidence type="ECO:0007744" key="32">
    <source>
    </source>
</evidence>
<evidence type="ECO:0007744" key="33">
    <source>
    </source>
</evidence>
<evidence type="ECO:0007744" key="34">
    <source>
    </source>
</evidence>
<evidence type="ECO:0007744" key="35">
    <source>
    </source>
</evidence>
<evidence type="ECO:0007744" key="36">
    <source>
    </source>
</evidence>
<evidence type="ECO:0007829" key="37">
    <source>
        <dbReference type="PDB" id="1WXP"/>
    </source>
</evidence>
<evidence type="ECO:0007829" key="38">
    <source>
        <dbReference type="PDB" id="7APK"/>
    </source>
</evidence>
<evidence type="ECO:0007829" key="39">
    <source>
        <dbReference type="PDB" id="7ZNL"/>
    </source>
</evidence>
<comment type="function">
    <text evidence="1 8 10 11 13 14 18">Component of the THO subcomplex of the TREX complex which is thought to couple mRNA transcription, processing and nuclear export, and which specifically associates with spliced mRNA and not with unspliced pre-mRNA (PubMed:15833825, PubMed:15998806, PubMed:17190602). Required for efficient export of polyadenylated RNA (PubMed:23222130). The THOC1-THOC2-THOC3 core complex alone is sufficient to bind export factor NXF1-NXT1 and promote ATPase activity of DDX39B/UAP56 (PubMed:33191911). TREX is recruited to spliced mRNAs by a transcription-independent mechanism, binds to mRNA upstream of the exon-junction complex (EJC) and is recruited in a splicing- and cap-dependent manner to a region near the 5' end of the mRNA where it functions in mRNA export to the cytoplasm via the TAP/NXF1 pathway (PubMed:15833825, PubMed:15998806, PubMed:17190602). Regulates transcriptional elongation of a subset of genes (PubMed:22144908). Involved in genome stability by preventing co-transcriptional R-loop formation (By similarity). May play a role in hair cell formation, hence may be involved in hearing (By similarity).</text>
</comment>
<comment type="function">
    <text>Participates in an apoptotic pathway which is characterized by activation of caspase-6, increases in the expression of BAK1 and BCL2L1 and activation of NF-kappa-B. This pathway does not require p53/TP53, nor does the presence of p53/TP53 affect the efficiency of cell killing. Activates a G2/M cell cycle checkpoint prior to the onset of apoptosis. Apoptosis is inhibited by association with RB1.</text>
</comment>
<comment type="function">
    <text evidence="12">(Microbial infection) The TREX complex is essential for the export of Kaposi's sarcoma-associated herpesvirus (KSHV) intronless mRNAs and infectious virus production.</text>
</comment>
<comment type="subunit">
    <text evidence="5 8 9 10 14 16 18 19 20">Component of the THO subcomplex, which is composed of THOC1, THOC2, THOC3, THOC5, THOC6 and THOC7 (PubMed:33191911, PubMed:37020021). The THO subcomplex interacts with DDX39B to form the THO-DDX39B complex which multimerizes into a 28-subunit tetrameric assembly (PubMed:33191911, PubMed:37020021). Component of the transcription/export (TREX) complex at least composed of ALYREF/THOC4, DDX39B, SARNP/CIP29, CHTOP and the THO subcomplex; in the complex interacts with THOC2, THOC5 and THOC7 (PubMed:33191911, PubMed:37020021). TREX seems to have a dynamic structure involving ATP-dependent remodeling (PubMed:23222130, PubMed:37020021). Binds to the hypophosphorylated form of RB1. Interacts with RNA polymerase II. Interacts with LUZP4.</text>
</comment>
<comment type="interaction">
    <interactant intactId="EBI-1765605">
        <id>Q96FV9</id>
    </interactant>
    <interactant intactId="EBI-712648">
        <id>O95994</id>
        <label>AGR2</label>
    </interactant>
    <organismsDiffer>false</organismsDiffer>
    <experiments>3</experiments>
</comment>
<comment type="interaction">
    <interactant intactId="EBI-1765605">
        <id>Q96FV9</id>
    </interactant>
    <interactant intactId="EBI-11745576">
        <id>Q6PJH3</id>
        <label>AKAP9</label>
    </interactant>
    <organismsDiffer>false</organismsDiffer>
    <experiments>3</experiments>
</comment>
<comment type="interaction">
    <interactant intactId="EBI-1765605">
        <id>Q96FV9</id>
    </interactant>
    <interactant intactId="EBI-1188472">
        <id>P78358</id>
        <label>CTAG1B</label>
    </interactant>
    <organismsDiffer>false</organismsDiffer>
    <experiments>3</experiments>
</comment>
<comment type="interaction">
    <interactant intactId="EBI-1765605">
        <id>Q96FV9</id>
    </interactant>
    <interactant intactId="EBI-949824">
        <id>O00471</id>
        <label>EXOC5</label>
    </interactant>
    <organismsDiffer>false</organismsDiffer>
    <experiments>3</experiments>
</comment>
<comment type="interaction">
    <interactant intactId="EBI-1765605">
        <id>Q96FV9</id>
    </interactant>
    <interactant intactId="EBI-11519926">
        <id>Q6PI77</id>
        <label>GPRASP3</label>
    </interactant>
    <organismsDiffer>false</organismsDiffer>
    <experiments>3</experiments>
</comment>
<comment type="interaction">
    <interactant intactId="EBI-1765605">
        <id>Q96FV9</id>
    </interactant>
    <interactant intactId="EBI-751857">
        <id>O15481</id>
        <label>MAGEB4</label>
    </interactant>
    <organismsDiffer>false</organismsDiffer>
    <experiments>3</experiments>
</comment>
<comment type="interaction">
    <interactant intactId="EBI-1765605">
        <id>Q96FV9</id>
    </interactant>
    <interactant intactId="EBI-739825">
        <id>Q96BY2</id>
        <label>MOAP1</label>
    </interactant>
    <organismsDiffer>false</organismsDiffer>
    <experiments>7</experiments>
</comment>
<comment type="interaction">
    <interactant intactId="EBI-1765605">
        <id>Q96FV9</id>
    </interactant>
    <interactant intactId="EBI-747278">
        <id>P26367</id>
        <label>PAX6</label>
    </interactant>
    <organismsDiffer>false</organismsDiffer>
    <experiments>3</experiments>
</comment>
<comment type="interaction">
    <interactant intactId="EBI-1765605">
        <id>Q96FV9</id>
    </interactant>
    <interactant intactId="EBI-721802">
        <id>Q9BZL4</id>
        <label>PPP1R12C</label>
    </interactant>
    <organismsDiffer>false</organismsDiffer>
    <experiments>3</experiments>
</comment>
<comment type="interaction">
    <interactant intactId="EBI-1765605">
        <id>Q96FV9</id>
    </interactant>
    <interactant intactId="EBI-913954">
        <id>Q9UJ41</id>
        <label>RABGEF1</label>
    </interactant>
    <organismsDiffer>false</organismsDiffer>
    <experiments>3</experiments>
</comment>
<comment type="interaction">
    <interactant intactId="EBI-1765605">
        <id>Q96FV9</id>
    </interactant>
    <interactant intactId="EBI-10829018">
        <id>Q04864-2</id>
        <label>REL</label>
    </interactant>
    <organismsDiffer>false</organismsDiffer>
    <experiments>3</experiments>
</comment>
<comment type="interaction">
    <interactant intactId="EBI-1765605">
        <id>Q96FV9</id>
    </interactant>
    <interactant intactId="EBI-742268">
        <id>O75478</id>
        <label>TADA2A</label>
    </interactant>
    <organismsDiffer>false</organismsDiffer>
    <experiments>3</experiments>
</comment>
<comment type="interaction">
    <interactant intactId="EBI-1765605">
        <id>Q96FV9</id>
    </interactant>
    <interactant intactId="EBI-5280316">
        <id>Q13769</id>
        <label>THOC5</label>
    </interactant>
    <organismsDiffer>false</organismsDiffer>
    <experiments>12</experiments>
</comment>
<comment type="interaction">
    <interactant intactId="EBI-1765605">
        <id>Q96FV9</id>
    </interactant>
    <interactant intactId="EBI-719493">
        <id>P14373</id>
        <label>TRIM27</label>
    </interactant>
    <organismsDiffer>false</organismsDiffer>
    <experiments>3</experiments>
</comment>
<comment type="interaction">
    <interactant intactId="EBI-1765605">
        <id>Q96FV9</id>
    </interactant>
    <interactant intactId="EBI-2130429">
        <id>Q9BYV2</id>
        <label>TRIM54</label>
    </interactant>
    <organismsDiffer>false</organismsDiffer>
    <experiments>3</experiments>
</comment>
<comment type="interaction">
    <interactant intactId="EBI-1765605">
        <id>Q96FV9</id>
    </interactant>
    <interactant intactId="EBI-739895">
        <id>Q8N6Y0</id>
        <label>USHBP1</label>
    </interactant>
    <organismsDiffer>false</organismsDiffer>
    <experiments>3</experiments>
</comment>
<comment type="interaction">
    <interactant intactId="EBI-1765605">
        <id>Q96FV9</id>
    </interactant>
    <interactant intactId="EBI-12030590">
        <id>Q9H0C1</id>
        <label>ZMYND12</label>
    </interactant>
    <organismsDiffer>false</organismsDiffer>
    <experiments>3</experiments>
</comment>
<comment type="subcellular location">
    <molecule>Isoform 1</molecule>
    <subcellularLocation>
        <location>Nucleus speckle</location>
    </subcellularLocation>
    <subcellularLocation>
        <location>Nucleus</location>
        <location>Nucleoplasm</location>
    </subcellularLocation>
    <subcellularLocation>
        <location>Nucleus matrix</location>
    </subcellularLocation>
    <subcellularLocation>
        <location>Cytoplasm</location>
    </subcellularLocation>
    <text>Can shuttle between the nucleus and cytoplasm. Nuclear localization is required for induction of apoptotic cell death. Translocates to the cytoplasm during the early phase of apoptosis execution.</text>
</comment>
<comment type="subcellular location">
    <molecule>Isoform 2</molecule>
    <subcellularLocation>
        <location>Cytoplasm</location>
    </subcellularLocation>
</comment>
<comment type="alternative products">
    <event type="alternative splicing"/>
    <isoform>
        <id>Q96FV9-1</id>
        <name>1</name>
        <sequence type="displayed"/>
    </isoform>
    <isoform>
        <id>Q96FV9-2</id>
        <name>2</name>
        <name>p84N5s</name>
        <sequence type="described" ref="VSP_038073 VSP_038074"/>
    </isoform>
</comment>
<comment type="tissue specificity">
    <text evidence="7 8">Ubiquitous. Expressed in various cancer cell lines. Expressed at very low levels in normal breast epithelial cells and highly expressed in breast tumors. Expression is strongly associated with an aggressive phenotype of breast tumors and expression correlates with tumor size and the metastatic state of the tumor progression.</text>
</comment>
<comment type="induction">
    <text evidence="7">Up-regulated during cell proliferation.</text>
</comment>
<comment type="domain">
    <text evidence="4">An intact death domain is needed for apoptosis.</text>
</comment>
<comment type="PTM">
    <text>Expression is altered specifically during apoptosis and is accompanied by the appearance of novel forms with smaller apparent molecular mass.</text>
</comment>
<comment type="PTM">
    <text evidence="15">Polyubiquitinated, leading to proteasomal degradation; probably involves NEDD4.</text>
</comment>
<comment type="disease" evidence="17">
    <disease id="DI-06614">
        <name>Deafness, autosomal dominant, 86</name>
        <acronym>DFNA86</acronym>
        <description>A form of non-syndromic, sensorineural hearing loss. Sensorineural hearing loss results from damage to the neural receptors of the inner ear, the nerve pathways to the brain, or the area of the brain that receives sound information. DFNA86 is characterized by progressive, bilateral hearing loss that is most predominant in the high frequencies, begins mildly during the fourth decade and gradually progresses to severe-to-profound deafness in the seventh and eighth decades. Affected subjects have tinnitus, while vestibular dysfunction or other clinical abnormalities are not present.</description>
        <dbReference type="MIM" id="620280"/>
    </disease>
    <text>The disease is caused by variants affecting the gene represented in this entry.</text>
</comment>
<comment type="miscellaneous">
    <molecule>Isoform 2</molecule>
    <text evidence="23">May be due to an intron retention.</text>
</comment>
<comment type="similarity">
    <text evidence="23">Belongs to the THOC1 family.</text>
</comment>
<organism>
    <name type="scientific">Homo sapiens</name>
    <name type="common">Human</name>
    <dbReference type="NCBI Taxonomy" id="9606"/>
    <lineage>
        <taxon>Eukaryota</taxon>
        <taxon>Metazoa</taxon>
        <taxon>Chordata</taxon>
        <taxon>Craniata</taxon>
        <taxon>Vertebrata</taxon>
        <taxon>Euteleostomi</taxon>
        <taxon>Mammalia</taxon>
        <taxon>Eutheria</taxon>
        <taxon>Euarchontoglires</taxon>
        <taxon>Primates</taxon>
        <taxon>Haplorrhini</taxon>
        <taxon>Catarrhini</taxon>
        <taxon>Hominidae</taxon>
        <taxon>Homo</taxon>
    </lineage>
</organism>
<sequence length="657" mass="75666">MSPTPPLFSLPEARTRFTKSTREALNNKNIKPLLSTFSQVPGSENEKKCTLDQAFRGILEEEIINHSSCENVLAIISLAIGGVTEGICTASTPFVLLGDVLDCLPLDQCDTIFTFVEKNVATWKSNTFYSAGKNYLLRMCNDLLRRLSKSQNTVFCGRIQLFLARLFPLSEKSGLNLQSQFNLENVTVFNTNEQESTLGQKHTEDREEGMDVEEGEMGDEEAPTTCSIPIDYNLYRKFWSLQDYFRNPVQCYEKISWKTFLKYSEEVLAVFKSYKLDDTQASRKKMEELKTGGEHVYFAKFLTSEKLMDLQLSDSNFRRHILLQYLILFQYLKGQVKFKSSNYVLTDEQSLWIEDTTKSVYQLLSENPPDGERFSKMVEHILNTEENWNSWKNEGCPSFVKERTSDTKPTRIIRKRTAPEDFLGKGPTKKILMGNEELTRLWNLCPDNMEACKSETREHMPTLEEFFEEAIEQADPENMVENEYKAVNNSNYGWRALRLLARRSPHFFQPTNQQFKSLPEYLENMVIKLAKELPPPSEEIKTGEDEDEEDNDALLKENESPDVRRDKPVTGEQIEVFANKLGEQWKILAPYLEMKDSEIRQIECDSEDMKMRAKQLLVAWQDQEGVHATPENLINALNKSGLSDLAESLTNDNETNS</sequence>
<feature type="chain" id="PRO_0000072520" description="THO complex subunit 1">
    <location>
        <begin position="1"/>
        <end position="657"/>
    </location>
</feature>
<feature type="domain" description="Death" evidence="2">
    <location>
        <begin position="570"/>
        <end position="653"/>
    </location>
</feature>
<feature type="region of interest" description="Dock domain; interaction with THOC2" evidence="18 25">
    <location>
        <begin position="133"/>
        <end position="167"/>
    </location>
</feature>
<feature type="region of interest" description="Disordered" evidence="3">
    <location>
        <begin position="194"/>
        <end position="222"/>
    </location>
</feature>
<feature type="region of interest" description="Dock domain; interaction with THOC2" evidence="18 25">
    <location>
        <begin position="227"/>
        <end position="397"/>
    </location>
</feature>
<feature type="region of interest" description="Disordered" evidence="3">
    <location>
        <begin position="533"/>
        <end position="569"/>
    </location>
</feature>
<feature type="short sequence motif" description="Nuclear localization signal" evidence="6">
    <location>
        <begin position="414"/>
        <end position="430"/>
    </location>
</feature>
<feature type="compositionally biased region" description="Acidic residues" evidence="3">
    <location>
        <begin position="206"/>
        <end position="222"/>
    </location>
</feature>
<feature type="compositionally biased region" description="Basic and acidic residues" evidence="3">
    <location>
        <begin position="553"/>
        <end position="569"/>
    </location>
</feature>
<feature type="modified residue" description="N-acetylmethionine" evidence="30">
    <location>
        <position position="1"/>
    </location>
</feature>
<feature type="modified residue" description="Phosphoserine" evidence="28 30 31">
    <location>
        <position position="2"/>
    </location>
</feature>
<feature type="modified residue" description="Phosphothreonine" evidence="31">
    <location>
        <position position="4"/>
    </location>
</feature>
<feature type="modified residue" description="N6-acetyllysine" evidence="29">
    <location>
        <position position="133"/>
    </location>
</feature>
<feature type="modified residue" description="N6-acetyllysine" evidence="29">
    <location>
        <position position="300"/>
    </location>
</feature>
<feature type="modified residue" description="Phosphoserine" evidence="31">
    <location>
        <position position="537"/>
    </location>
</feature>
<feature type="modified residue" description="Phosphothreonine" evidence="31">
    <location>
        <position position="542"/>
    </location>
</feature>
<feature type="modified residue" description="Phosphoserine" evidence="30 31">
    <location>
        <position position="560"/>
    </location>
</feature>
<feature type="cross-link" description="Glycyl lysine isopeptide (Lys-Gly) (interchain with G-Cter in SUMO2)" evidence="33 35 36">
    <location>
        <position position="31"/>
    </location>
</feature>
<feature type="cross-link" description="Glycyl lysine isopeptide (Lys-Gly) (interchain with G-Cter in SUMO2)" evidence="33">
    <location>
        <position position="408"/>
    </location>
</feature>
<feature type="cross-link" description="Glycyl lysine isopeptide (Lys-Gly) (interchain with G-Cter in SUMO2)" evidence="36">
    <location>
        <position position="580"/>
    </location>
</feature>
<feature type="cross-link" description="Glycyl lysine isopeptide (Lys-Gly) (interchain with G-Cter in SUMO1); alternate" evidence="32">
    <location>
        <position position="595"/>
    </location>
</feature>
<feature type="cross-link" description="Glycyl lysine isopeptide (Lys-Gly) (interchain with G-Cter in SUMO2); alternate" evidence="32 33 34 36">
    <location>
        <position position="595"/>
    </location>
</feature>
<feature type="splice variant" id="VSP_038073" description="In isoform 2." evidence="21">
    <original>LLSENPPDGERFSKM</original>
    <variation>VSSTRNKPMIEKMEI</variation>
    <location>
        <begin position="363"/>
        <end position="377"/>
    </location>
</feature>
<feature type="splice variant" id="VSP_038074" description="In isoform 2." evidence="21">
    <location>
        <begin position="378"/>
        <end position="657"/>
    </location>
</feature>
<feature type="sequence variant" id="VAR_088179" description="In DFNA86; impaired function in hair cell formation, when tested in a heterologous system." evidence="17">
    <original>L</original>
    <variation>V</variation>
    <location>
        <position position="183"/>
    </location>
</feature>
<feature type="mutagenesis site" description="Loss of ability to induce apoptosis. Interferes with normal response of SaOS-2 cells to radiation." evidence="4">
    <original>L</original>
    <variation>P</variation>
    <location>
        <position position="617"/>
    </location>
</feature>
<feature type="mutagenesis site" description="Loss of ability to induce apoptosis. Interferes with normal response of SaOS-2 cells to radiation." evidence="4">
    <original>W</original>
    <variation>P</variation>
    <variation>R</variation>
    <location>
        <position position="620"/>
    </location>
</feature>
<feature type="sequence conflict" description="In Ref. 2; AAT81408." evidence="23" ref="2">
    <original>N</original>
    <variation>H</variation>
    <location>
        <position position="71"/>
    </location>
</feature>
<feature type="sequence conflict" description="In Ref. 2; AAT81408." evidence="23" ref="2">
    <original>G</original>
    <variation>A</variation>
    <location>
        <position position="86"/>
    </location>
</feature>
<feature type="sequence conflict" description="In Ref. 1; AAA53571." evidence="23" ref="1">
    <original>S</original>
    <variation>A</variation>
    <location>
        <position position="130"/>
    </location>
</feature>
<feature type="sequence conflict" description="In Ref. 3; BAG37293." evidence="23" ref="3">
    <original>N</original>
    <variation>S</variation>
    <location>
        <position position="134"/>
    </location>
</feature>
<feature type="sequence conflict" description="In Ref. 1; AAA53571." evidence="23" ref="1">
    <original>M</original>
    <variation>T</variation>
    <location>
        <position position="433"/>
    </location>
</feature>
<feature type="sequence conflict" description="In Ref. 1; AAA53571." evidence="23" ref="1">
    <original>V</original>
    <variation>A</variation>
    <location>
        <position position="480"/>
    </location>
</feature>
<feature type="sequence conflict" description="In Ref. 1; AAA53571." evidence="23" ref="1">
    <original>V</original>
    <variation>M</variation>
    <location>
        <position position="487"/>
    </location>
</feature>
<feature type="sequence conflict" description="In Ref. 1; AAA53571." evidence="23" ref="1">
    <original>R</original>
    <variation>K</variation>
    <location>
        <position position="498"/>
    </location>
</feature>
<feature type="sequence conflict" description="In Ref. 1; AAA53571." evidence="23" ref="1">
    <original>P</original>
    <variation>Q</variation>
    <location>
        <position position="519"/>
    </location>
</feature>
<feature type="helix" evidence="38">
    <location>
        <begin position="11"/>
        <end position="21"/>
    </location>
</feature>
<feature type="helix" evidence="38">
    <location>
        <begin position="30"/>
        <end position="36"/>
    </location>
</feature>
<feature type="helix" evidence="38">
    <location>
        <begin position="46"/>
        <end position="64"/>
    </location>
</feature>
<feature type="helix" evidence="38">
    <location>
        <begin position="72"/>
        <end position="83"/>
    </location>
</feature>
<feature type="helix" evidence="38">
    <location>
        <begin position="92"/>
        <end position="103"/>
    </location>
</feature>
<feature type="helix" evidence="38">
    <location>
        <begin position="107"/>
        <end position="119"/>
    </location>
</feature>
<feature type="helix" evidence="38">
    <location>
        <begin position="134"/>
        <end position="146"/>
    </location>
</feature>
<feature type="strand" evidence="38">
    <location>
        <begin position="149"/>
        <end position="151"/>
    </location>
</feature>
<feature type="helix" evidence="38">
    <location>
        <begin position="153"/>
        <end position="166"/>
    </location>
</feature>
<feature type="helix" evidence="38">
    <location>
        <begin position="232"/>
        <end position="246"/>
    </location>
</feature>
<feature type="turn" evidence="38">
    <location>
        <begin position="249"/>
        <end position="252"/>
    </location>
</feature>
<feature type="helix" evidence="38">
    <location>
        <begin position="255"/>
        <end position="274"/>
    </location>
</feature>
<feature type="turn" evidence="39">
    <location>
        <begin position="305"/>
        <end position="307"/>
    </location>
</feature>
<feature type="helix" evidence="38">
    <location>
        <begin position="310"/>
        <end position="313"/>
    </location>
</feature>
<feature type="helix" evidence="38">
    <location>
        <begin position="315"/>
        <end position="333"/>
    </location>
</feature>
<feature type="helix" evidence="38">
    <location>
        <begin position="347"/>
        <end position="365"/>
    </location>
</feature>
<feature type="turn" evidence="38">
    <location>
        <begin position="368"/>
        <end position="370"/>
    </location>
</feature>
<feature type="helix" evidence="38">
    <location>
        <begin position="371"/>
        <end position="391"/>
    </location>
</feature>
<feature type="helix" evidence="39">
    <location>
        <begin position="436"/>
        <end position="442"/>
    </location>
</feature>
<feature type="turn" evidence="39">
    <location>
        <begin position="462"/>
        <end position="464"/>
    </location>
</feature>
<feature type="turn" evidence="39">
    <location>
        <begin position="470"/>
        <end position="473"/>
    </location>
</feature>
<feature type="helix" evidence="39">
    <location>
        <begin position="490"/>
        <end position="502"/>
    </location>
</feature>
<feature type="strand" evidence="39">
    <location>
        <begin position="507"/>
        <end position="509"/>
    </location>
</feature>
<feature type="helix" evidence="39">
    <location>
        <begin position="518"/>
        <end position="527"/>
    </location>
</feature>
<feature type="strand" evidence="37">
    <location>
        <begin position="565"/>
        <end position="567"/>
    </location>
</feature>
<feature type="helix" evidence="37">
    <location>
        <begin position="571"/>
        <end position="581"/>
    </location>
</feature>
<feature type="turn" evidence="37">
    <location>
        <begin position="582"/>
        <end position="584"/>
    </location>
</feature>
<feature type="helix" evidence="37">
    <location>
        <begin position="585"/>
        <end position="588"/>
    </location>
</feature>
<feature type="turn" evidence="37">
    <location>
        <begin position="589"/>
        <end position="593"/>
    </location>
</feature>
<feature type="helix" evidence="37">
    <location>
        <begin position="596"/>
        <end position="605"/>
    </location>
</feature>
<feature type="helix" evidence="37">
    <location>
        <begin position="609"/>
        <end position="624"/>
    </location>
</feature>
<feature type="helix" evidence="37">
    <location>
        <begin position="625"/>
        <end position="627"/>
    </location>
</feature>
<feature type="helix" evidence="37">
    <location>
        <begin position="630"/>
        <end position="639"/>
    </location>
</feature>
<feature type="helix" evidence="37">
    <location>
        <begin position="643"/>
        <end position="650"/>
    </location>
</feature>
<accession>Q96FV9</accession>
<accession>B2RBP6</accession>
<accession>Q15219</accession>
<accession>Q64I72</accession>
<accession>Q64I73</accession>
<keyword id="KW-0002">3D-structure</keyword>
<keyword id="KW-0007">Acetylation</keyword>
<keyword id="KW-0025">Alternative splicing</keyword>
<keyword id="KW-0053">Apoptosis</keyword>
<keyword id="KW-0963">Cytoplasm</keyword>
<keyword id="KW-0209">Deafness</keyword>
<keyword id="KW-0225">Disease variant</keyword>
<keyword id="KW-0238">DNA-binding</keyword>
<keyword id="KW-1017">Isopeptide bond</keyword>
<keyword id="KW-0507">mRNA processing</keyword>
<keyword id="KW-0508">mRNA splicing</keyword>
<keyword id="KW-0509">mRNA transport</keyword>
<keyword id="KW-1010">Non-syndromic deafness</keyword>
<keyword id="KW-0539">Nucleus</keyword>
<keyword id="KW-0597">Phosphoprotein</keyword>
<keyword id="KW-1267">Proteomics identification</keyword>
<keyword id="KW-1185">Reference proteome</keyword>
<keyword id="KW-0694">RNA-binding</keyword>
<keyword id="KW-0804">Transcription</keyword>
<keyword id="KW-0805">Transcription regulation</keyword>
<keyword id="KW-0813">Transport</keyword>
<keyword id="KW-0832">Ubl conjugation</keyword>
<gene>
    <name type="primary">THOC1</name>
    <name type="synonym">HPR1</name>
</gene>
<proteinExistence type="evidence at protein level"/>
<reference key="1">
    <citation type="journal article" date="1994" name="J. Cell Biol.">
        <title>The amino-terminal region of the retinoblastoma gene product binds a novel nuclear matrix protein that co-localizes to centers for RNA processing.</title>
        <authorList>
            <person name="Durfee T."/>
            <person name="Mancini M.A."/>
            <person name="Jones D."/>
            <person name="Elledge S.J."/>
            <person name="Lee W.H."/>
        </authorList>
    </citation>
    <scope>NUCLEOTIDE SEQUENCE [MRNA] (ISOFORM 1)</scope>
    <scope>SUBCELLULAR LOCATION</scope>
    <scope>INTERACTION WITH RB1</scope>
    <source>
        <tissue>Lymphocyte</tissue>
    </source>
</reference>
<reference key="2">
    <citation type="journal article" date="2004" name="FEBS Lett.">
        <title>The death domain protein p84N5, but not the short isoform p84N5s, is cell cycle-regulated and shuttles between the nucleus and the cytoplasm.</title>
        <authorList>
            <person name="Gasparri F."/>
            <person name="Sola F."/>
            <person name="Locatelli G."/>
            <person name="Muzio M."/>
        </authorList>
    </citation>
    <scope>NUCLEOTIDE SEQUENCE [MRNA] (ISOFORM 2)</scope>
    <scope>NUCLEOTIDE SEQUENCE [MRNA] OF 1-86 (ISOFORM 1)</scope>
    <scope>SUBCELLULAR LOCATION</scope>
    <scope>TISSUE SPECIFICITY</scope>
    <scope>INDUCTION</scope>
</reference>
<reference key="3">
    <citation type="journal article" date="2004" name="Nat. Genet.">
        <title>Complete sequencing and characterization of 21,243 full-length human cDNAs.</title>
        <authorList>
            <person name="Ota T."/>
            <person name="Suzuki Y."/>
            <person name="Nishikawa T."/>
            <person name="Otsuki T."/>
            <person name="Sugiyama T."/>
            <person name="Irie R."/>
            <person name="Wakamatsu A."/>
            <person name="Hayashi K."/>
            <person name="Sato H."/>
            <person name="Nagai K."/>
            <person name="Kimura K."/>
            <person name="Makita H."/>
            <person name="Sekine M."/>
            <person name="Obayashi M."/>
            <person name="Nishi T."/>
            <person name="Shibahara T."/>
            <person name="Tanaka T."/>
            <person name="Ishii S."/>
            <person name="Yamamoto J."/>
            <person name="Saito K."/>
            <person name="Kawai Y."/>
            <person name="Isono Y."/>
            <person name="Nakamura Y."/>
            <person name="Nagahari K."/>
            <person name="Murakami K."/>
            <person name="Yasuda T."/>
            <person name="Iwayanagi T."/>
            <person name="Wagatsuma M."/>
            <person name="Shiratori A."/>
            <person name="Sudo H."/>
            <person name="Hosoiri T."/>
            <person name="Kaku Y."/>
            <person name="Kodaira H."/>
            <person name="Kondo H."/>
            <person name="Sugawara M."/>
            <person name="Takahashi M."/>
            <person name="Kanda K."/>
            <person name="Yokoi T."/>
            <person name="Furuya T."/>
            <person name="Kikkawa E."/>
            <person name="Omura Y."/>
            <person name="Abe K."/>
            <person name="Kamihara K."/>
            <person name="Katsuta N."/>
            <person name="Sato K."/>
            <person name="Tanikawa M."/>
            <person name="Yamazaki M."/>
            <person name="Ninomiya K."/>
            <person name="Ishibashi T."/>
            <person name="Yamashita H."/>
            <person name="Murakawa K."/>
            <person name="Fujimori K."/>
            <person name="Tanai H."/>
            <person name="Kimata M."/>
            <person name="Watanabe M."/>
            <person name="Hiraoka S."/>
            <person name="Chiba Y."/>
            <person name="Ishida S."/>
            <person name="Ono Y."/>
            <person name="Takiguchi S."/>
            <person name="Watanabe S."/>
            <person name="Yosida M."/>
            <person name="Hotuta T."/>
            <person name="Kusano J."/>
            <person name="Kanehori K."/>
            <person name="Takahashi-Fujii A."/>
            <person name="Hara H."/>
            <person name="Tanase T.-O."/>
            <person name="Nomura Y."/>
            <person name="Togiya S."/>
            <person name="Komai F."/>
            <person name="Hara R."/>
            <person name="Takeuchi K."/>
            <person name="Arita M."/>
            <person name="Imose N."/>
            <person name="Musashino K."/>
            <person name="Yuuki H."/>
            <person name="Oshima A."/>
            <person name="Sasaki N."/>
            <person name="Aotsuka S."/>
            <person name="Yoshikawa Y."/>
            <person name="Matsunawa H."/>
            <person name="Ichihara T."/>
            <person name="Shiohata N."/>
            <person name="Sano S."/>
            <person name="Moriya S."/>
            <person name="Momiyama H."/>
            <person name="Satoh N."/>
            <person name="Takami S."/>
            <person name="Terashima Y."/>
            <person name="Suzuki O."/>
            <person name="Nakagawa S."/>
            <person name="Senoh A."/>
            <person name="Mizoguchi H."/>
            <person name="Goto Y."/>
            <person name="Shimizu F."/>
            <person name="Wakebe H."/>
            <person name="Hishigaki H."/>
            <person name="Watanabe T."/>
            <person name="Sugiyama A."/>
            <person name="Takemoto M."/>
            <person name="Kawakami B."/>
            <person name="Yamazaki M."/>
            <person name="Watanabe K."/>
            <person name="Kumagai A."/>
            <person name="Itakura S."/>
            <person name="Fukuzumi Y."/>
            <person name="Fujimori Y."/>
            <person name="Komiyama M."/>
            <person name="Tashiro H."/>
            <person name="Tanigami A."/>
            <person name="Fujiwara T."/>
            <person name="Ono T."/>
            <person name="Yamada K."/>
            <person name="Fujii Y."/>
            <person name="Ozaki K."/>
            <person name="Hirao M."/>
            <person name="Ohmori Y."/>
            <person name="Kawabata A."/>
            <person name="Hikiji T."/>
            <person name="Kobatake N."/>
            <person name="Inagaki H."/>
            <person name="Ikema Y."/>
            <person name="Okamoto S."/>
            <person name="Okitani R."/>
            <person name="Kawakami T."/>
            <person name="Noguchi S."/>
            <person name="Itoh T."/>
            <person name="Shigeta K."/>
            <person name="Senba T."/>
            <person name="Matsumura K."/>
            <person name="Nakajima Y."/>
            <person name="Mizuno T."/>
            <person name="Morinaga M."/>
            <person name="Sasaki M."/>
            <person name="Togashi T."/>
            <person name="Oyama M."/>
            <person name="Hata H."/>
            <person name="Watanabe M."/>
            <person name="Komatsu T."/>
            <person name="Mizushima-Sugano J."/>
            <person name="Satoh T."/>
            <person name="Shirai Y."/>
            <person name="Takahashi Y."/>
            <person name="Nakagawa K."/>
            <person name="Okumura K."/>
            <person name="Nagase T."/>
            <person name="Nomura N."/>
            <person name="Kikuchi H."/>
            <person name="Masuho Y."/>
            <person name="Yamashita R."/>
            <person name="Nakai K."/>
            <person name="Yada T."/>
            <person name="Nakamura Y."/>
            <person name="Ohara O."/>
            <person name="Isogai T."/>
            <person name="Sugano S."/>
        </authorList>
    </citation>
    <scope>NUCLEOTIDE SEQUENCE [LARGE SCALE MRNA] (ISOFORM 1)</scope>
    <source>
        <tissue>Uterus</tissue>
    </source>
</reference>
<reference key="4">
    <citation type="journal article" date="2005" name="Nature">
        <title>DNA sequence and analysis of human chromosome 18.</title>
        <authorList>
            <person name="Nusbaum C."/>
            <person name="Zody M.C."/>
            <person name="Borowsky M.L."/>
            <person name="Kamal M."/>
            <person name="Kodira C.D."/>
            <person name="Taylor T.D."/>
            <person name="Whittaker C.A."/>
            <person name="Chang J.L."/>
            <person name="Cuomo C.A."/>
            <person name="Dewar K."/>
            <person name="FitzGerald M.G."/>
            <person name="Yang X."/>
            <person name="Abouelleil A."/>
            <person name="Allen N.R."/>
            <person name="Anderson S."/>
            <person name="Bloom T."/>
            <person name="Bugalter B."/>
            <person name="Butler J."/>
            <person name="Cook A."/>
            <person name="DeCaprio D."/>
            <person name="Engels R."/>
            <person name="Garber M."/>
            <person name="Gnirke A."/>
            <person name="Hafez N."/>
            <person name="Hall J.L."/>
            <person name="Norman C.H."/>
            <person name="Itoh T."/>
            <person name="Jaffe D.B."/>
            <person name="Kuroki Y."/>
            <person name="Lehoczky J."/>
            <person name="Lui A."/>
            <person name="Macdonald P."/>
            <person name="Mauceli E."/>
            <person name="Mikkelsen T.S."/>
            <person name="Naylor J.W."/>
            <person name="Nicol R."/>
            <person name="Nguyen C."/>
            <person name="Noguchi H."/>
            <person name="O'Leary S.B."/>
            <person name="Piqani B."/>
            <person name="Smith C.L."/>
            <person name="Talamas J.A."/>
            <person name="Topham K."/>
            <person name="Totoki Y."/>
            <person name="Toyoda A."/>
            <person name="Wain H.M."/>
            <person name="Young S.K."/>
            <person name="Zeng Q."/>
            <person name="Zimmer A.R."/>
            <person name="Fujiyama A."/>
            <person name="Hattori M."/>
            <person name="Birren B.W."/>
            <person name="Sakaki Y."/>
            <person name="Lander E.S."/>
        </authorList>
    </citation>
    <scope>NUCLEOTIDE SEQUENCE [LARGE SCALE GENOMIC DNA]</scope>
</reference>
<reference key="5">
    <citation type="submission" date="2005-09" db="EMBL/GenBank/DDBJ databases">
        <authorList>
            <person name="Mural R.J."/>
            <person name="Istrail S."/>
            <person name="Sutton G.G."/>
            <person name="Florea L."/>
            <person name="Halpern A.L."/>
            <person name="Mobarry C.M."/>
            <person name="Lippert R."/>
            <person name="Walenz B."/>
            <person name="Shatkay H."/>
            <person name="Dew I."/>
            <person name="Miller J.R."/>
            <person name="Flanigan M.J."/>
            <person name="Edwards N.J."/>
            <person name="Bolanos R."/>
            <person name="Fasulo D."/>
            <person name="Halldorsson B.V."/>
            <person name="Hannenhalli S."/>
            <person name="Turner R."/>
            <person name="Yooseph S."/>
            <person name="Lu F."/>
            <person name="Nusskern D.R."/>
            <person name="Shue B.C."/>
            <person name="Zheng X.H."/>
            <person name="Zhong F."/>
            <person name="Delcher A.L."/>
            <person name="Huson D.H."/>
            <person name="Kravitz S.A."/>
            <person name="Mouchard L."/>
            <person name="Reinert K."/>
            <person name="Remington K.A."/>
            <person name="Clark A.G."/>
            <person name="Waterman M.S."/>
            <person name="Eichler E.E."/>
            <person name="Adams M.D."/>
            <person name="Hunkapiller M.W."/>
            <person name="Myers E.W."/>
            <person name="Venter J.C."/>
        </authorList>
    </citation>
    <scope>NUCLEOTIDE SEQUENCE [LARGE SCALE GENOMIC DNA]</scope>
</reference>
<reference key="6">
    <citation type="journal article" date="2004" name="Genome Res.">
        <title>The status, quality, and expansion of the NIH full-length cDNA project: the Mammalian Gene Collection (MGC).</title>
        <authorList>
            <consortium name="The MGC Project Team"/>
        </authorList>
    </citation>
    <scope>NUCLEOTIDE SEQUENCE [LARGE SCALE MRNA] (ISOFORM 1)</scope>
    <source>
        <tissue>Bone marrow</tissue>
    </source>
</reference>
<reference key="7">
    <citation type="journal article" date="1999" name="Mol. Biol. Cell">
        <title>Apoptosis induced by the nuclear death domain protein p84N5 is inhibited by association with Rb protein.</title>
        <authorList>
            <person name="Doostzadeh-Cizeron J."/>
            <person name="Evans R."/>
            <person name="Yin S."/>
            <person name="Goodrich D.W."/>
        </authorList>
    </citation>
    <scope>FUNCTION</scope>
    <scope>PTM</scope>
    <scope>DOMAIN</scope>
    <scope>MUTAGENESIS OF LEU-617 AND TRP-620</scope>
</reference>
<reference key="8">
    <citation type="journal article" date="2000" name="J. Biol. Chem.">
        <title>Apoptosis induced by the nuclear death domain protein p84N5 is associated with caspase-6 and NF-kappa B activation.</title>
        <authorList>
            <person name="Doostzadeh-Cizeron J."/>
            <person name="Yin S."/>
            <person name="Goodrich D.W."/>
        </authorList>
    </citation>
    <scope>FUNCTION</scope>
</reference>
<reference key="9">
    <citation type="journal article" date="2001" name="J. Biol. Chem.">
        <title>The nuclear death domain protein p84N5 activates a G2/M cell cycle checkpoint prior to the onset of apoptosis.</title>
        <authorList>
            <person name="Doostzadeh-Cizeron J."/>
            <person name="Terry N.H."/>
            <person name="Goodrich D.W."/>
        </authorList>
    </citation>
    <scope>FUNCTION</scope>
</reference>
<reference key="10">
    <citation type="journal article" date="2002" name="Nature">
        <title>TREX is a conserved complex coupling transcription with messenger RNA export.</title>
        <authorList>
            <person name="Straesser K."/>
            <person name="Masuda S."/>
            <person name="Mason P."/>
            <person name="Pfannstiel J."/>
            <person name="Oppizzi M."/>
            <person name="Rodriguez-Navarro S."/>
            <person name="Rondon A.G."/>
            <person name="Aguilera A."/>
            <person name="Struhl K."/>
            <person name="Reed R."/>
            <person name="Hurt E."/>
        </authorList>
    </citation>
    <scope>FUNCTION</scope>
    <scope>INTERACTION WITH THE TREX COMPLEX</scope>
</reference>
<reference key="11">
    <citation type="journal article" date="2002" name="Oncogene">
        <title>Nuclear localization is required for induction of apoptotic cell death by the Rb-associated p84N5 death domain protein.</title>
        <authorList>
            <person name="Evans R.L."/>
            <person name="Poe B.S."/>
            <person name="Goodrich D.W."/>
        </authorList>
    </citation>
    <scope>SUBCELLULAR LOCATION</scope>
    <scope>NUCLEAR LOCALIZATION SIGNAL</scope>
</reference>
<reference key="12">
    <citation type="journal article" date="2005" name="Cancer Res.">
        <title>Linking transcriptional elongation and messenger RNA export to metastatic breast cancers.</title>
        <authorList>
            <person name="Guo S."/>
            <person name="Hakimi M.A."/>
            <person name="Baillat D."/>
            <person name="Chen X."/>
            <person name="Farber M.J."/>
            <person name="Klein-Szanto A.J."/>
            <person name="Cooch N.S."/>
            <person name="Godwin A.K."/>
            <person name="Shiekhattar R."/>
        </authorList>
    </citation>
    <scope>IDENTIFICATION IN THE TREX COMPLEX</scope>
    <scope>FUNCTION OF THE TREX COMPLEX</scope>
    <scope>IDENTIFICATION BY MASS SPECTROMETRY</scope>
    <scope>TISSUE SPECIFICITY</scope>
</reference>
<reference key="13">
    <citation type="journal article" date="2005" name="Genes Dev.">
        <title>Recruitment of the human TREX complex to mRNA during splicing.</title>
        <authorList>
            <person name="Masuda S."/>
            <person name="Das R."/>
            <person name="Cheng H."/>
            <person name="Hurt E."/>
            <person name="Dorman N."/>
            <person name="Reed R."/>
        </authorList>
    </citation>
    <scope>IDENTIFICATION IN THE THO AND TREX COMPLEX</scope>
    <scope>FUNCTION OF THE TREX COMPLEX</scope>
    <scope>IDENTIFICATION BY MASS SPECTROMETRY</scope>
</reference>
<reference key="14">
    <citation type="journal article" date="2005" name="Mol. Cell. Biol.">
        <title>Human hHpr1/p84/Thoc1 regulates transcriptional elongation and physically links RNA polymerase II and RNA processing factors.</title>
        <authorList>
            <person name="Li Y."/>
            <person name="Wang X."/>
            <person name="Zhang X."/>
            <person name="Goodrich D.W."/>
        </authorList>
    </citation>
    <scope>FUNCTION</scope>
    <scope>INTERACTION WITH THOC2; DDX39B AND RNA POLYMERASE II</scope>
</reference>
<reference key="15">
    <citation type="journal article" date="2006" name="Cell">
        <title>Human mRNA export machinery recruited to the 5' end of mRNA.</title>
        <authorList>
            <person name="Cheng H."/>
            <person name="Dufu K."/>
            <person name="Lee C.-S."/>
            <person name="Hsu J.L."/>
            <person name="Dias A."/>
            <person name="Reed R."/>
        </authorList>
    </citation>
    <scope>FUNCTION OF THE TREX COMPLEX</scope>
</reference>
<reference key="16">
    <citation type="journal article" date="2008" name="J. Proteome Res.">
        <title>Combining protein-based IMAC, peptide-based IMAC, and MudPIT for efficient phosphoproteomic analysis.</title>
        <authorList>
            <person name="Cantin G.T."/>
            <person name="Yi W."/>
            <person name="Lu B."/>
            <person name="Park S.K."/>
            <person name="Xu T."/>
            <person name="Lee J.-D."/>
            <person name="Yates J.R. III"/>
        </authorList>
    </citation>
    <scope>IDENTIFICATION BY MASS SPECTROMETRY [LARGE SCALE ANALYSIS]</scope>
    <source>
        <tissue>Cervix carcinoma</tissue>
    </source>
</reference>
<reference key="17">
    <citation type="journal article" date="2008" name="PLoS Pathog.">
        <title>Recruitment of the complete hTREX complex is required for Kaposi's sarcoma-associated herpesvirus intronless mRNA nuclear export and virus replication.</title>
        <authorList>
            <person name="Boyne J.R."/>
            <person name="Colgan K.J."/>
            <person name="Whitehouse A."/>
        </authorList>
    </citation>
    <scope>FUNCTION OF THE TREX COMPLEX (MICROBIAL INFECTION)</scope>
</reference>
<reference key="18">
    <citation type="journal article" date="2008" name="Proc. Natl. Acad. Sci. U.S.A.">
        <title>A quantitative atlas of mitotic phosphorylation.</title>
        <authorList>
            <person name="Dephoure N."/>
            <person name="Zhou C."/>
            <person name="Villen J."/>
            <person name="Beausoleil S.A."/>
            <person name="Bakalarski C.E."/>
            <person name="Elledge S.J."/>
            <person name="Gygi S.P."/>
        </authorList>
    </citation>
    <scope>PHOSPHORYLATION [LARGE SCALE ANALYSIS] AT SER-2</scope>
    <scope>IDENTIFICATION BY MASS SPECTROMETRY [LARGE SCALE ANALYSIS]</scope>
    <source>
        <tissue>Cervix carcinoma</tissue>
    </source>
</reference>
<reference key="19">
    <citation type="journal article" date="2009" name="Science">
        <title>Lysine acetylation targets protein complexes and co-regulates major cellular functions.</title>
        <authorList>
            <person name="Choudhary C."/>
            <person name="Kumar C."/>
            <person name="Gnad F."/>
            <person name="Nielsen M.L."/>
            <person name="Rehman M."/>
            <person name="Walther T.C."/>
            <person name="Olsen J.V."/>
            <person name="Mann M."/>
        </authorList>
    </citation>
    <scope>ACETYLATION [LARGE SCALE ANALYSIS] AT LYS-133 AND LYS-300</scope>
    <scope>IDENTIFICATION BY MASS SPECTROMETRY [LARGE SCALE ANALYSIS]</scope>
</reference>
<reference key="20">
    <citation type="journal article" date="2010" name="Sci. Signal.">
        <title>Quantitative phosphoproteomics reveals widespread full phosphorylation site occupancy during mitosis.</title>
        <authorList>
            <person name="Olsen J.V."/>
            <person name="Vermeulen M."/>
            <person name="Santamaria A."/>
            <person name="Kumar C."/>
            <person name="Miller M.L."/>
            <person name="Jensen L.J."/>
            <person name="Gnad F."/>
            <person name="Cox J."/>
            <person name="Jensen T.S."/>
            <person name="Nigg E.A."/>
            <person name="Brunak S."/>
            <person name="Mann M."/>
        </authorList>
    </citation>
    <scope>ACETYLATION [LARGE SCALE ANALYSIS] AT MET-1</scope>
    <scope>PHOSPHORYLATION [LARGE SCALE ANALYSIS] AT SER-2 AND SER-560</scope>
    <scope>IDENTIFICATION BY MASS SPECTROMETRY [LARGE SCALE ANALYSIS]</scope>
    <source>
        <tissue>Cervix carcinoma</tissue>
    </source>
</reference>
<reference key="21">
    <citation type="journal article" date="2011" name="BMC Syst. Biol.">
        <title>Initial characterization of the human central proteome.</title>
        <authorList>
            <person name="Burkard T.R."/>
            <person name="Planyavsky M."/>
            <person name="Kaupe I."/>
            <person name="Breitwieser F.P."/>
            <person name="Buerckstuemmer T."/>
            <person name="Bennett K.L."/>
            <person name="Superti-Furga G."/>
            <person name="Colinge J."/>
        </authorList>
    </citation>
    <scope>IDENTIFICATION BY MASS SPECTROMETRY [LARGE SCALE ANALYSIS]</scope>
</reference>
<reference key="22">
    <citation type="journal article" date="2011" name="PLoS Genet.">
        <title>Genome instability and transcription elongation impairment in human cells depleted of THO/TREX.</title>
        <authorList>
            <person name="Dominguez-Sanchez M.S."/>
            <person name="Barroso S."/>
            <person name="Gomez-Gonzalez B."/>
            <person name="Luna R."/>
            <person name="Aguilera A."/>
        </authorList>
    </citation>
    <scope>FUNCTION</scope>
</reference>
<reference key="23">
    <citation type="journal article" date="2013" name="J. Proteome Res.">
        <title>Toward a comprehensive characterization of a human cancer cell phosphoproteome.</title>
        <authorList>
            <person name="Zhou H."/>
            <person name="Di Palma S."/>
            <person name="Preisinger C."/>
            <person name="Peng M."/>
            <person name="Polat A.N."/>
            <person name="Heck A.J."/>
            <person name="Mohammed S."/>
        </authorList>
    </citation>
    <scope>PHOSPHORYLATION [LARGE SCALE ANALYSIS] AT SER-2; THR-4; SER-537; THR-542 AND SER-560</scope>
    <scope>IDENTIFICATION BY MASS SPECTROMETRY [LARGE SCALE ANALYSIS]</scope>
    <source>
        <tissue>Cervix carcinoma</tissue>
        <tissue>Erythroleukemia</tissue>
    </source>
</reference>
<reference key="24">
    <citation type="journal article" date="2013" name="Nucleic Acids Res.">
        <title>Aly and THO are required for assembly of the human TREX complex and association of TREX components with the spliced mRNA.</title>
        <authorList>
            <person name="Chi B."/>
            <person name="Wang Q."/>
            <person name="Wu G."/>
            <person name="Tan M."/>
            <person name="Wang L."/>
            <person name="Shi M."/>
            <person name="Chang X."/>
            <person name="Cheng H."/>
        </authorList>
    </citation>
    <scope>FUNCTION</scope>
</reference>
<reference key="25">
    <citation type="journal article" date="2013" name="PLoS ONE">
        <title>The Thoc1 encoded ribonucleoprotein is a substrate for the NEDD4-1 E3 ubiquitin protein ligase.</title>
        <authorList>
            <person name="Song F."/>
            <person name="Fan C."/>
            <person name="Wang X."/>
            <person name="Goodrich D.W."/>
        </authorList>
    </citation>
    <scope>UBIQUITINATION BY NEDD4</scope>
</reference>
<reference key="26">
    <citation type="journal article" date="2014" name="Nat. Struct. Mol. Biol.">
        <title>Uncovering global SUMOylation signaling networks in a site-specific manner.</title>
        <authorList>
            <person name="Hendriks I.A."/>
            <person name="D'Souza R.C."/>
            <person name="Yang B."/>
            <person name="Verlaan-de Vries M."/>
            <person name="Mann M."/>
            <person name="Vertegaal A.C."/>
        </authorList>
    </citation>
    <scope>SUMOYLATION [LARGE SCALE ANALYSIS] AT LYS-31; LYS-408 AND LYS-595</scope>
    <scope>IDENTIFICATION BY MASS SPECTROMETRY [LARGE SCALE ANALYSIS]</scope>
</reference>
<reference key="27">
    <citation type="journal article" date="2014" name="Proc. Natl. Acad. Sci. U.S.A.">
        <title>Mapping of SUMO sites and analysis of SUMOylation changes induced by external stimuli.</title>
        <authorList>
            <person name="Impens F."/>
            <person name="Radoshevich L."/>
            <person name="Cossart P."/>
            <person name="Ribet D."/>
        </authorList>
    </citation>
    <scope>SUMOYLATION [LARGE SCALE ANALYSIS] AT LYS-595</scope>
    <scope>IDENTIFICATION BY MASS SPECTROMETRY [LARGE SCALE ANALYSIS]</scope>
</reference>
<reference key="28">
    <citation type="journal article" date="2015" name="Cell Rep.">
        <title>SUMO-2 orchestrates chromatin modifiers in response to DNA damage.</title>
        <authorList>
            <person name="Hendriks I.A."/>
            <person name="Treffers L.W."/>
            <person name="Verlaan-de Vries M."/>
            <person name="Olsen J.V."/>
            <person name="Vertegaal A.C."/>
        </authorList>
    </citation>
    <scope>SUMOYLATION [LARGE SCALE ANALYSIS] AT LYS-31</scope>
    <scope>IDENTIFICATION BY MASS SPECTROMETRY [LARGE SCALE ANALYSIS]</scope>
</reference>
<reference key="29">
    <citation type="journal article" date="2015" name="Mol. Cell. Proteomics">
        <title>System-wide analysis of SUMOylation dynamics in response to replication stress reveals novel small ubiquitin-like modified target proteins and acceptor lysines relevant for genome stability.</title>
        <authorList>
            <person name="Xiao Z."/>
            <person name="Chang J.G."/>
            <person name="Hendriks I.A."/>
            <person name="Sigurdsson J.O."/>
            <person name="Olsen J.V."/>
            <person name="Vertegaal A.C."/>
        </authorList>
    </citation>
    <scope>SUMOYLATION [LARGE SCALE ANALYSIS] AT LYS-595</scope>
    <scope>IDENTIFICATION BY MASS SPECTROMETRY [LARGE SCALE ANALYSIS]</scope>
</reference>
<reference key="30">
    <citation type="journal article" date="2015" name="Nucleic Acids Res.">
        <title>Luzp4 defines a new mRNA export pathway in cancer cells.</title>
        <authorList>
            <person name="Viphakone N."/>
            <person name="Cumberbatch M.G."/>
            <person name="Livingstone M.J."/>
            <person name="Heath P.R."/>
            <person name="Dickman M.J."/>
            <person name="Catto J.W."/>
            <person name="Wilson S.A."/>
        </authorList>
    </citation>
    <scope>INTERACTION WITH LUZP4</scope>
</reference>
<reference key="31">
    <citation type="journal article" date="2017" name="Nat. Struct. Mol. Biol.">
        <title>Site-specific mapping of the human SUMO proteome reveals co-modification with phosphorylation.</title>
        <authorList>
            <person name="Hendriks I.A."/>
            <person name="Lyon D."/>
            <person name="Young C."/>
            <person name="Jensen L.J."/>
            <person name="Vertegaal A.C."/>
            <person name="Nielsen M.L."/>
        </authorList>
    </citation>
    <scope>SUMOYLATION [LARGE SCALE ANALYSIS] AT LYS-31; LYS-580 AND LYS-595</scope>
    <scope>IDENTIFICATION BY MASS SPECTROMETRY [LARGE SCALE ANALYSIS]</scope>
</reference>
<reference evidence="24" key="32">
    <citation type="submission" date="2005-07" db="PDB data bank">
        <title>Solution structure of the death domain of nuclear matrix protein p84.</title>
        <authorList>
            <consortium name="RIKEN structural genomics initiative (RSGI)"/>
        </authorList>
    </citation>
    <scope>STRUCTURE BY NMR OF 561-657</scope>
</reference>
<reference key="33">
    <citation type="journal article" date="2020" name="PLoS Genet.">
        <title>THOC1 deficiency leads to late-onset nonsyndromic hearing loss through p53-mediated hair cell apoptosis.</title>
        <authorList>
            <person name="Zhang L."/>
            <person name="Gao Y."/>
            <person name="Zhang R."/>
            <person name="Sun F."/>
            <person name="Cheng C."/>
            <person name="Qian F."/>
            <person name="Duan X."/>
            <person name="Wei G."/>
            <person name="Sun C."/>
            <person name="Pang X."/>
            <person name="Chen P."/>
            <person name="Chai R."/>
            <person name="Yang T."/>
            <person name="Wu H."/>
            <person name="Liu D."/>
        </authorList>
    </citation>
    <scope>INVOLVEMENT IN DFNA86</scope>
    <scope>VARIANT DFNA86 VAL-183</scope>
</reference>
<reference evidence="25" key="34">
    <citation type="journal article" date="2020" name="Elife">
        <title>Structure of the human core transcription-export complex reveals a hub for multivalent interactions.</title>
        <authorList>
            <person name="Puehringer T."/>
            <person name="Hohmann U."/>
            <person name="Fin L."/>
            <person name="Pacheco-Fiallos B."/>
            <person name="Schellhaas U."/>
            <person name="Brennecke J."/>
            <person name="Plaschka C."/>
        </authorList>
    </citation>
    <scope>STRUCTURE BY ELECTRON MICROSCOPY (3.30 ANGSTROMS) OF 2-657 IN THO-DDX39B COMPLEX</scope>
    <scope>FUNCTION</scope>
    <scope>SUBUNIT</scope>
</reference>
<reference evidence="26 27" key="35">
    <citation type="journal article" date="2023" name="Nature">
        <title>mRNA recognition and packaging by the human transcription-export complex.</title>
        <authorList>
            <person name="Pacheco-Fiallos B."/>
            <person name="Vorlander M.K."/>
            <person name="Riabov-Bassat D."/>
            <person name="Fin L."/>
            <person name="O'Reilly F.J."/>
            <person name="Ayala F.I."/>
            <person name="Schellhaas U."/>
            <person name="Rappsilber J."/>
            <person name="Plaschka C."/>
        </authorList>
    </citation>
    <scope>STRUCTURE BY ELECTRON MICROSCOPY (3.45 ANGSTROMS) IN TREX COMPLEX</scope>
    <scope>SUBUNIT</scope>
</reference>
<name>THOC1_HUMAN</name>
<protein>
    <recommendedName>
        <fullName evidence="22">THO complex subunit 1</fullName>
    </recommendedName>
    <alternativeName>
        <fullName>Nuclear matrix protein p84</fullName>
        <shortName>p84N5</shortName>
    </alternativeName>
    <alternativeName>
        <fullName>hTREX84</fullName>
    </alternativeName>
</protein>